<keyword id="KW-0472">Membrane</keyword>
<keyword id="KW-0496">Mitochondrion</keyword>
<keyword id="KW-0999">Mitochondrion inner membrane</keyword>
<keyword id="KW-1278">Translocase</keyword>
<keyword id="KW-0812">Transmembrane</keyword>
<keyword id="KW-1133">Transmembrane helix</keyword>
<comment type="function">
    <text evidence="2">Component of the cytochrome c oxidase, the last enzyme in the mitochondrial electron transport chain which drives oxidative phosphorylation. The respiratory chain contains 3 multisubunit complexes succinate dehydrogenase (complex II, CII), ubiquinol-cytochrome c oxidoreductase (cytochrome b-c1 complex, complex III, CIII) and cytochrome c oxidase (complex IV, CIV), that cooperate to transfer electrons derived from NADH and succinate to molecular oxygen, creating an electrochemical gradient over the inner membrane that drives transmembrane transport and the ATP synthase. Cytochrome c oxidase is the component of the respiratory chain that catalyzes the reduction of oxygen to water. Electrons originating from reduced cytochrome c in the intermembrane space (IMS) are transferred via the dinuclear copper A center (CU(A)) of subunit 2 and heme A of subunit 1 to the active site in subunit 1, a binuclear center (BNC) formed by heme A3 and copper B (CU(B)). The BNC reduces molecular oxygen to 2 water molecules using 4 electrons from cytochrome c in the IMS and 4 protons from the mitochondrial matrix.</text>
</comment>
<comment type="catalytic activity">
    <reaction evidence="2">
        <text>4 Fe(II)-[cytochrome c] + O2 + 8 H(+)(in) = 4 Fe(III)-[cytochrome c] + 2 H2O + 4 H(+)(out)</text>
        <dbReference type="Rhea" id="RHEA:11436"/>
        <dbReference type="Rhea" id="RHEA-COMP:10350"/>
        <dbReference type="Rhea" id="RHEA-COMP:14399"/>
        <dbReference type="ChEBI" id="CHEBI:15377"/>
        <dbReference type="ChEBI" id="CHEBI:15378"/>
        <dbReference type="ChEBI" id="CHEBI:15379"/>
        <dbReference type="ChEBI" id="CHEBI:29033"/>
        <dbReference type="ChEBI" id="CHEBI:29034"/>
        <dbReference type="EC" id="7.1.1.9"/>
    </reaction>
    <physiologicalReaction direction="left-to-right" evidence="2">
        <dbReference type="Rhea" id="RHEA:11437"/>
    </physiologicalReaction>
</comment>
<comment type="subunit">
    <text evidence="1">Component of the cytochrome c oxidase (complex IV, CIV), a multisubunit enzyme composed of 14 subunits. The complex is composed of a catalytic core of 3 subunits MT-CO1, MT-CO2 and MT-CO3, encoded in the mitochondrial DNA, and 11 supernumerary subunits COX4I, COX5A, COX5B, COX6A, COX6B, COX6C, COX7A, COX7B, COX7C, COX8 and NDUFA4, which are encoded in the nuclear genome. The complex exists as a monomer or a dimer and forms supercomplexes (SCs) in the inner mitochondrial membrane with NADH-ubiquinone oxidoreductase (complex I, CI) and ubiquinol-cytochrome c oxidoreductase (cytochrome b-c1 complex, complex III, CIII), resulting in different assemblies (supercomplex SCI(1)III(2)IV(1) and megacomplex MCI(2)III(2)IV(2)).</text>
</comment>
<comment type="subcellular location">
    <subcellularLocation>
        <location evidence="1">Mitochondrion inner membrane</location>
        <topology evidence="1">Multi-pass membrane protein</topology>
    </subcellularLocation>
</comment>
<comment type="similarity">
    <text evidence="3">Belongs to the cytochrome c oxidase subunit 3 family.</text>
</comment>
<proteinExistence type="inferred from homology"/>
<protein>
    <recommendedName>
        <fullName>Cytochrome c oxidase subunit 3</fullName>
        <ecNumber>7.1.1.9</ecNumber>
    </recommendedName>
    <alternativeName>
        <fullName>Cytochrome c oxidase polypeptide III</fullName>
    </alternativeName>
</protein>
<feature type="chain" id="PRO_0000183735" description="Cytochrome c oxidase subunit 3">
    <location>
        <begin position="1"/>
        <end position="261"/>
    </location>
</feature>
<feature type="topological domain" description="Mitochondrial matrix" evidence="1">
    <location>
        <begin position="1"/>
        <end position="15"/>
    </location>
</feature>
<feature type="transmembrane region" description="Helical; Name=I" evidence="1">
    <location>
        <begin position="16"/>
        <end position="34"/>
    </location>
</feature>
<feature type="topological domain" description="Mitochondrial intermembrane" evidence="1">
    <location>
        <begin position="35"/>
        <end position="40"/>
    </location>
</feature>
<feature type="transmembrane region" description="Helical; Name=II" evidence="1">
    <location>
        <begin position="41"/>
        <end position="66"/>
    </location>
</feature>
<feature type="topological domain" description="Mitochondrial matrix" evidence="1">
    <location>
        <begin position="67"/>
        <end position="72"/>
    </location>
</feature>
<feature type="transmembrane region" description="Helical; Name=III" evidence="1">
    <location>
        <begin position="73"/>
        <end position="105"/>
    </location>
</feature>
<feature type="topological domain" description="Mitochondrial intermembrane" evidence="1">
    <location>
        <begin position="106"/>
        <end position="128"/>
    </location>
</feature>
<feature type="transmembrane region" description="Helical; Name=IV" evidence="1">
    <location>
        <begin position="129"/>
        <end position="152"/>
    </location>
</feature>
<feature type="topological domain" description="Mitochondrial matrix" evidence="1">
    <location>
        <begin position="153"/>
        <end position="155"/>
    </location>
</feature>
<feature type="transmembrane region" description="Helical; Name=V" evidence="1">
    <location>
        <begin position="156"/>
        <end position="183"/>
    </location>
</feature>
<feature type="topological domain" description="Mitochondrial intermembrane" evidence="1">
    <location>
        <begin position="184"/>
        <end position="190"/>
    </location>
</feature>
<feature type="transmembrane region" description="Helical; Name=VI" evidence="1">
    <location>
        <begin position="191"/>
        <end position="223"/>
    </location>
</feature>
<feature type="topological domain" description="Mitochondrial matrix" evidence="1">
    <location>
        <begin position="224"/>
        <end position="232"/>
    </location>
</feature>
<feature type="transmembrane region" description="Helical; Name=VII" evidence="1">
    <location>
        <begin position="233"/>
        <end position="256"/>
    </location>
</feature>
<feature type="topological domain" description="Mitochondrial intermembrane" evidence="1">
    <location>
        <begin position="257"/>
        <end position="261"/>
    </location>
</feature>
<accession>O47701</accession>
<organism>
    <name type="scientific">Antidorcas marsupialis</name>
    <name type="common">Springbok</name>
    <dbReference type="NCBI Taxonomy" id="59523"/>
    <lineage>
        <taxon>Eukaryota</taxon>
        <taxon>Metazoa</taxon>
        <taxon>Chordata</taxon>
        <taxon>Craniata</taxon>
        <taxon>Vertebrata</taxon>
        <taxon>Euteleostomi</taxon>
        <taxon>Mammalia</taxon>
        <taxon>Eutheria</taxon>
        <taxon>Laurasiatheria</taxon>
        <taxon>Artiodactyla</taxon>
        <taxon>Ruminantia</taxon>
        <taxon>Pecora</taxon>
        <taxon>Bovidae</taxon>
        <taxon>Antilopinae</taxon>
        <taxon>Antidorcas</taxon>
    </lineage>
</organism>
<geneLocation type="mitochondrion"/>
<sequence>MTHQTHAYHMVNPSPWPLTGALSALLMTSGLTMWFHFNSMTLLTLGLTTNMLTMYQWWRDIIRESTFQGHHTPNVQKGLRYGMILFIISEVLFFTGFFWAFYHSSLAPTPELGGCWPPTGIHPLNPLEVPLLNTSVLLASGVSITWAHHSLMEGNRNHMLQALFITISLGVYFTLLQASEYYEAPFTISDGVYGSTFFVATGFHGLHVIIGSTFLIVCFFRQLKFHFTSNHHFGFEAAAWYWHFVDVVWLFLYVSIYWWGS</sequence>
<dbReference type="EC" id="7.1.1.9"/>
<dbReference type="EMBL" id="AF030466">
    <property type="protein sequence ID" value="AAB93605.1"/>
    <property type="molecule type" value="Genomic_DNA"/>
</dbReference>
<dbReference type="SMR" id="O47701"/>
<dbReference type="GO" id="GO:0005743">
    <property type="term" value="C:mitochondrial inner membrane"/>
    <property type="evidence" value="ECO:0007669"/>
    <property type="project" value="UniProtKB-SubCell"/>
</dbReference>
<dbReference type="GO" id="GO:0045277">
    <property type="term" value="C:respiratory chain complex IV"/>
    <property type="evidence" value="ECO:0000250"/>
    <property type="project" value="UniProtKB"/>
</dbReference>
<dbReference type="GO" id="GO:0004129">
    <property type="term" value="F:cytochrome-c oxidase activity"/>
    <property type="evidence" value="ECO:0007669"/>
    <property type="project" value="UniProtKB-EC"/>
</dbReference>
<dbReference type="GO" id="GO:0006123">
    <property type="term" value="P:mitochondrial electron transport, cytochrome c to oxygen"/>
    <property type="evidence" value="ECO:0007669"/>
    <property type="project" value="TreeGrafter"/>
</dbReference>
<dbReference type="GO" id="GO:0008535">
    <property type="term" value="P:respiratory chain complex IV assembly"/>
    <property type="evidence" value="ECO:0000250"/>
    <property type="project" value="UniProtKB"/>
</dbReference>
<dbReference type="CDD" id="cd01665">
    <property type="entry name" value="Cyt_c_Oxidase_III"/>
    <property type="match status" value="1"/>
</dbReference>
<dbReference type="FunFam" id="1.10.287.70:FF:000048">
    <property type="entry name" value="Cytochrome c oxidase subunit 3"/>
    <property type="match status" value="1"/>
</dbReference>
<dbReference type="FunFam" id="1.20.120.80:FF:000002">
    <property type="entry name" value="Cytochrome c oxidase subunit 3"/>
    <property type="match status" value="1"/>
</dbReference>
<dbReference type="Gene3D" id="1.10.287.70">
    <property type="match status" value="1"/>
</dbReference>
<dbReference type="Gene3D" id="1.20.120.80">
    <property type="entry name" value="Cytochrome c oxidase, subunit III, four-helix bundle"/>
    <property type="match status" value="1"/>
</dbReference>
<dbReference type="InterPro" id="IPR024791">
    <property type="entry name" value="Cyt_c/ubiquinol_Oxase_su3"/>
</dbReference>
<dbReference type="InterPro" id="IPR033945">
    <property type="entry name" value="Cyt_c_oxase_su3_dom"/>
</dbReference>
<dbReference type="InterPro" id="IPR000298">
    <property type="entry name" value="Cyt_c_oxidase-like_su3"/>
</dbReference>
<dbReference type="InterPro" id="IPR035973">
    <property type="entry name" value="Cyt_c_oxidase_su3-like_sf"/>
</dbReference>
<dbReference type="InterPro" id="IPR013833">
    <property type="entry name" value="Cyt_c_oxidase_su3_a-hlx"/>
</dbReference>
<dbReference type="PANTHER" id="PTHR11403:SF7">
    <property type="entry name" value="CYTOCHROME C OXIDASE SUBUNIT 3"/>
    <property type="match status" value="1"/>
</dbReference>
<dbReference type="PANTHER" id="PTHR11403">
    <property type="entry name" value="CYTOCHROME C OXIDASE SUBUNIT III"/>
    <property type="match status" value="1"/>
</dbReference>
<dbReference type="Pfam" id="PF00510">
    <property type="entry name" value="COX3"/>
    <property type="match status" value="1"/>
</dbReference>
<dbReference type="SUPFAM" id="SSF81452">
    <property type="entry name" value="Cytochrome c oxidase subunit III-like"/>
    <property type="match status" value="1"/>
</dbReference>
<dbReference type="PROSITE" id="PS50253">
    <property type="entry name" value="COX3"/>
    <property type="match status" value="1"/>
</dbReference>
<evidence type="ECO:0000250" key="1">
    <source>
        <dbReference type="UniProtKB" id="P00415"/>
    </source>
</evidence>
<evidence type="ECO:0000250" key="2">
    <source>
        <dbReference type="UniProtKB" id="P00420"/>
    </source>
</evidence>
<evidence type="ECO:0000305" key="3"/>
<gene>
    <name type="primary">MT-CO3</name>
    <name type="synonym">COIII</name>
    <name type="synonym">COXIII</name>
    <name type="synonym">MTCO3</name>
</gene>
<name>COX3_ANTMR</name>
<reference key="1">
    <citation type="journal article" date="1999" name="Mol. Phylogenet. Evol.">
        <title>Phylogenetic relationships in the bovid subfamily Antilopinae based on mitochondrial DNA sequences.</title>
        <authorList>
            <person name="Rebholz W.E.R."/>
            <person name="Harley E.H."/>
        </authorList>
    </citation>
    <scope>NUCLEOTIDE SEQUENCE [GENOMIC DNA]</scope>
</reference>